<proteinExistence type="evidence at protein level"/>
<evidence type="ECO:0000255" key="1"/>
<evidence type="ECO:0000255" key="2">
    <source>
        <dbReference type="PROSITE-ProRule" id="PRU00096"/>
    </source>
</evidence>
<evidence type="ECO:0000269" key="3">
    <source>
    </source>
</evidence>
<evidence type="ECO:0000269" key="4">
    <source>
    </source>
</evidence>
<evidence type="ECO:0000269" key="5">
    <source>
    </source>
</evidence>
<evidence type="ECO:0000269" key="6">
    <source>
    </source>
</evidence>
<evidence type="ECO:0000269" key="7">
    <source>
    </source>
</evidence>
<evidence type="ECO:0000269" key="8">
    <source>
    </source>
</evidence>
<evidence type="ECO:0000269" key="9">
    <source>
    </source>
</evidence>
<evidence type="ECO:0000305" key="10"/>
<evidence type="ECO:0000305" key="11">
    <source>
    </source>
</evidence>
<evidence type="ECO:0007744" key="12">
    <source>
    </source>
</evidence>
<evidence type="ECO:0007829" key="13">
    <source>
        <dbReference type="PDB" id="7RRM"/>
    </source>
</evidence>
<keyword id="KW-0002">3D-structure</keyword>
<keyword id="KW-1003">Cell membrane</keyword>
<keyword id="KW-0175">Coiled coil</keyword>
<keyword id="KW-0903">Direct protein sequencing</keyword>
<keyword id="KW-0256">Endoplasmic reticulum</keyword>
<keyword id="KW-0333">Golgi apparatus</keyword>
<keyword id="KW-0391">Immunity</keyword>
<keyword id="KW-0399">Innate immunity</keyword>
<keyword id="KW-0472">Membrane</keyword>
<keyword id="KW-0653">Protein transport</keyword>
<keyword id="KW-1267">Proteomics identification</keyword>
<keyword id="KW-1185">Reference proteome</keyword>
<keyword id="KW-0732">Signal</keyword>
<keyword id="KW-0812">Transmembrane</keyword>
<keyword id="KW-1133">Transmembrane helix</keyword>
<keyword id="KW-0813">Transport</keyword>
<sequence>MMAAGAALALALWLLMPPVEVGGAGPPPIQDGEFTFLLPAGRKQCFYQSAPANASLETEYQVIGGAGLDVDFTLESPQGVLLVSESRKADGVHTVEPTEAGDYKLCFDNSFSTISEKLVFFELIFDSLQDDEEVEGWAEAVEPEEMLDVKMEDIKESIETMRTRLERSIQMLTLLRAFEARDRNLQEGNLERVNFWSAVNVAVLLLVAVLQVCTLKRFFQDKRPVPT</sequence>
<organism>
    <name type="scientific">Homo sapiens</name>
    <name type="common">Human</name>
    <dbReference type="NCBI Taxonomy" id="9606"/>
    <lineage>
        <taxon>Eukaryota</taxon>
        <taxon>Metazoa</taxon>
        <taxon>Chordata</taxon>
        <taxon>Craniata</taxon>
        <taxon>Vertebrata</taxon>
        <taxon>Euteleostomi</taxon>
        <taxon>Mammalia</taxon>
        <taxon>Eutheria</taxon>
        <taxon>Euarchontoglires</taxon>
        <taxon>Primates</taxon>
        <taxon>Haplorrhini</taxon>
        <taxon>Catarrhini</taxon>
        <taxon>Hominidae</taxon>
        <taxon>Homo</taxon>
    </lineage>
</organism>
<feature type="signal peptide" evidence="6 12">
    <location>
        <begin position="1"/>
        <end position="23"/>
    </location>
</feature>
<feature type="chain" id="PRO_0000248019" description="Transmembrane emp24 domain-containing protein 1">
    <location>
        <begin position="24"/>
        <end position="227"/>
    </location>
</feature>
<feature type="topological domain" description="Extracellular" evidence="1">
    <location>
        <begin position="24"/>
        <end position="194"/>
    </location>
</feature>
<feature type="transmembrane region" description="Helical" evidence="1">
    <location>
        <begin position="195"/>
        <end position="215"/>
    </location>
</feature>
<feature type="topological domain" description="Cytoplasmic" evidence="1">
    <location>
        <begin position="216"/>
        <end position="227"/>
    </location>
</feature>
<feature type="domain" description="GOLD" evidence="2">
    <location>
        <begin position="43"/>
        <end position="125"/>
    </location>
</feature>
<feature type="coiled-coil region" evidence="1">
    <location>
        <begin position="145"/>
        <end position="170"/>
    </location>
</feature>
<feature type="short sequence motif" description="COPI vesicle coat-binding" evidence="1">
    <location>
        <begin position="218"/>
        <end position="227"/>
    </location>
</feature>
<feature type="short sequence motif" description="COPII vesicle coat-binding" evidence="1">
    <location>
        <begin position="218"/>
        <end position="219"/>
    </location>
</feature>
<feature type="sequence variant" id="VAR_036533" description="In a breast cancer sample; somatic mutation; dbSNP:rs755003968." evidence="5">
    <original>D</original>
    <variation>N</variation>
    <location>
        <position position="102"/>
    </location>
</feature>
<feature type="mutagenesis site" description="Significant loss of interaction with IL1RL1." evidence="7">
    <original>C</original>
    <variation>S</variation>
    <location>
        <position position="45"/>
    </location>
</feature>
<feature type="mutagenesis site" description="Significant loss of interaction with IL1RL1." evidence="7">
    <original>C</original>
    <variation>S</variation>
    <location>
        <position position="106"/>
    </location>
</feature>
<feature type="strand" evidence="13">
    <location>
        <begin position="30"/>
        <end position="38"/>
    </location>
</feature>
<feature type="strand" evidence="13">
    <location>
        <begin position="43"/>
        <end position="50"/>
    </location>
</feature>
<feature type="strand" evidence="13">
    <location>
        <begin position="55"/>
        <end position="65"/>
    </location>
</feature>
<feature type="strand" evidence="13">
    <location>
        <begin position="70"/>
        <end position="75"/>
    </location>
</feature>
<feature type="strand" evidence="13">
    <location>
        <begin position="81"/>
        <end position="97"/>
    </location>
</feature>
<feature type="strand" evidence="13">
    <location>
        <begin position="100"/>
        <end position="108"/>
    </location>
</feature>
<feature type="strand" evidence="13">
    <location>
        <begin position="116"/>
        <end position="125"/>
    </location>
</feature>
<protein>
    <recommendedName>
        <fullName>Transmembrane emp24 domain-containing protein 1</fullName>
    </recommendedName>
    <alternativeName>
        <fullName>Interleukin-1 receptor-like 1 ligand</fullName>
    </alternativeName>
    <alternativeName>
        <fullName>Putative T1/ST2 receptor-binding protein</fullName>
    </alternativeName>
    <alternativeName>
        <fullName>p24 family protein gamma-1</fullName>
        <shortName>Tp24</shortName>
        <shortName>p24gamma1</shortName>
    </alternativeName>
</protein>
<dbReference type="EMBL" id="U41804">
    <property type="protein sequence ID" value="AAC50419.1"/>
    <property type="molecule type" value="mRNA"/>
</dbReference>
<dbReference type="EMBL" id="AC007229">
    <property type="protein sequence ID" value="AAD23605.1"/>
    <property type="molecule type" value="Genomic_DNA"/>
</dbReference>
<dbReference type="EMBL" id="BC002443">
    <property type="protein sequence ID" value="AAH02443.1"/>
    <property type="molecule type" value="mRNA"/>
</dbReference>
<dbReference type="CCDS" id="CCDS12249.1"/>
<dbReference type="RefSeq" id="NP_006849.1">
    <property type="nucleotide sequence ID" value="NM_006858.4"/>
</dbReference>
<dbReference type="PDB" id="7RRM">
    <property type="method" value="X-ray"/>
    <property type="resolution" value="1.72 A"/>
    <property type="chains" value="A/B/C=23-130"/>
</dbReference>
<dbReference type="PDBsum" id="7RRM"/>
<dbReference type="SMR" id="Q13445"/>
<dbReference type="BioGRID" id="116208">
    <property type="interactions" value="94"/>
</dbReference>
<dbReference type="FunCoup" id="Q13445">
    <property type="interactions" value="1453"/>
</dbReference>
<dbReference type="IntAct" id="Q13445">
    <property type="interactions" value="48"/>
</dbReference>
<dbReference type="MINT" id="Q13445"/>
<dbReference type="STRING" id="9606.ENSP00000214869"/>
<dbReference type="TCDB" id="9.B.188.1.1">
    <property type="family name" value="the transmembrane emp24 domain-containing protein (tmed) family"/>
</dbReference>
<dbReference type="GlyGen" id="Q13445">
    <property type="glycosylation" value="2 sites, 1 O-linked glycan (1 site)"/>
</dbReference>
<dbReference type="iPTMnet" id="Q13445"/>
<dbReference type="PhosphoSitePlus" id="Q13445"/>
<dbReference type="SwissPalm" id="Q13445"/>
<dbReference type="BioMuta" id="TMED1"/>
<dbReference type="DMDM" id="74739789"/>
<dbReference type="jPOST" id="Q13445"/>
<dbReference type="MassIVE" id="Q13445"/>
<dbReference type="PaxDb" id="9606-ENSP00000214869"/>
<dbReference type="PeptideAtlas" id="Q13445"/>
<dbReference type="ProteomicsDB" id="59453"/>
<dbReference type="Pumba" id="Q13445"/>
<dbReference type="TopDownProteomics" id="Q13445"/>
<dbReference type="Antibodypedia" id="2281">
    <property type="antibodies" value="215 antibodies from 25 providers"/>
</dbReference>
<dbReference type="DNASU" id="11018"/>
<dbReference type="Ensembl" id="ENST00000214869.7">
    <property type="protein sequence ID" value="ENSP00000214869.1"/>
    <property type="gene ID" value="ENSG00000099203.7"/>
</dbReference>
<dbReference type="GeneID" id="11018"/>
<dbReference type="KEGG" id="hsa:11018"/>
<dbReference type="MANE-Select" id="ENST00000214869.7">
    <property type="protein sequence ID" value="ENSP00000214869.1"/>
    <property type="RefSeq nucleotide sequence ID" value="NM_006858.4"/>
    <property type="RefSeq protein sequence ID" value="NP_006849.1"/>
</dbReference>
<dbReference type="UCSC" id="uc002mpy.5">
    <property type="organism name" value="human"/>
</dbReference>
<dbReference type="AGR" id="HGNC:17291"/>
<dbReference type="CTD" id="11018"/>
<dbReference type="DisGeNET" id="11018"/>
<dbReference type="GeneCards" id="TMED1"/>
<dbReference type="HGNC" id="HGNC:17291">
    <property type="gene designation" value="TMED1"/>
</dbReference>
<dbReference type="HPA" id="ENSG00000099203">
    <property type="expression patterns" value="Low tissue specificity"/>
</dbReference>
<dbReference type="MIM" id="605395">
    <property type="type" value="gene"/>
</dbReference>
<dbReference type="neXtProt" id="NX_Q13445"/>
<dbReference type="OpenTargets" id="ENSG00000099203"/>
<dbReference type="PharmGKB" id="PA134972147"/>
<dbReference type="VEuPathDB" id="HostDB:ENSG00000099203"/>
<dbReference type="eggNOG" id="KOG3287">
    <property type="taxonomic scope" value="Eukaryota"/>
</dbReference>
<dbReference type="GeneTree" id="ENSGT00940000158445"/>
<dbReference type="HOGENOM" id="CLU_066963_0_0_1"/>
<dbReference type="InParanoid" id="Q13445"/>
<dbReference type="OMA" id="AGDYMIC"/>
<dbReference type="OrthoDB" id="5976732at2759"/>
<dbReference type="PAN-GO" id="Q13445">
    <property type="GO annotations" value="7 GO annotations based on evolutionary models"/>
</dbReference>
<dbReference type="PhylomeDB" id="Q13445"/>
<dbReference type="TreeFam" id="TF313000"/>
<dbReference type="PathwayCommons" id="Q13445"/>
<dbReference type="SignaLink" id="Q13445"/>
<dbReference type="BioGRID-ORCS" id="11018">
    <property type="hits" value="12 hits in 1156 CRISPR screens"/>
</dbReference>
<dbReference type="ChiTaRS" id="TMED1">
    <property type="organism name" value="human"/>
</dbReference>
<dbReference type="GeneWiki" id="TMED1"/>
<dbReference type="GenomeRNAi" id="11018"/>
<dbReference type="Pharos" id="Q13445">
    <property type="development level" value="Tbio"/>
</dbReference>
<dbReference type="PRO" id="PR:Q13445"/>
<dbReference type="Proteomes" id="UP000005640">
    <property type="component" value="Chromosome 19"/>
</dbReference>
<dbReference type="RNAct" id="Q13445">
    <property type="molecule type" value="protein"/>
</dbReference>
<dbReference type="Bgee" id="ENSG00000099203">
    <property type="expression patterns" value="Expressed in stromal cell of endometrium and 196 other cell types or tissues"/>
</dbReference>
<dbReference type="ExpressionAtlas" id="Q13445">
    <property type="expression patterns" value="baseline and differential"/>
</dbReference>
<dbReference type="GO" id="GO:0030134">
    <property type="term" value="C:COPII-coated ER to Golgi transport vesicle"/>
    <property type="evidence" value="ECO:0000318"/>
    <property type="project" value="GO_Central"/>
</dbReference>
<dbReference type="GO" id="GO:0005783">
    <property type="term" value="C:endoplasmic reticulum"/>
    <property type="evidence" value="ECO:0000314"/>
    <property type="project" value="UniProtKB"/>
</dbReference>
<dbReference type="GO" id="GO:0005789">
    <property type="term" value="C:endoplasmic reticulum membrane"/>
    <property type="evidence" value="ECO:0007669"/>
    <property type="project" value="UniProtKB-SubCell"/>
</dbReference>
<dbReference type="GO" id="GO:0005793">
    <property type="term" value="C:endoplasmic reticulum-Golgi intermediate compartment"/>
    <property type="evidence" value="ECO:0000314"/>
    <property type="project" value="UniProtKB"/>
</dbReference>
<dbReference type="GO" id="GO:0033116">
    <property type="term" value="C:endoplasmic reticulum-Golgi intermediate compartment membrane"/>
    <property type="evidence" value="ECO:0007669"/>
    <property type="project" value="UniProtKB-SubCell"/>
</dbReference>
<dbReference type="GO" id="GO:0005794">
    <property type="term" value="C:Golgi apparatus"/>
    <property type="evidence" value="ECO:0000314"/>
    <property type="project" value="UniProtKB"/>
</dbReference>
<dbReference type="GO" id="GO:0005886">
    <property type="term" value="C:plasma membrane"/>
    <property type="evidence" value="ECO:0007669"/>
    <property type="project" value="UniProtKB-SubCell"/>
</dbReference>
<dbReference type="GO" id="GO:0005102">
    <property type="term" value="F:signaling receptor binding"/>
    <property type="evidence" value="ECO:0000304"/>
    <property type="project" value="ProtInc"/>
</dbReference>
<dbReference type="GO" id="GO:0007267">
    <property type="term" value="P:cell-cell signaling"/>
    <property type="evidence" value="ECO:0000304"/>
    <property type="project" value="ProtInc"/>
</dbReference>
<dbReference type="GO" id="GO:0006888">
    <property type="term" value="P:endoplasmic reticulum to Golgi vesicle-mediated transport"/>
    <property type="evidence" value="ECO:0000318"/>
    <property type="project" value="GO_Central"/>
</dbReference>
<dbReference type="GO" id="GO:0007030">
    <property type="term" value="P:Golgi organization"/>
    <property type="evidence" value="ECO:0000318"/>
    <property type="project" value="GO_Central"/>
</dbReference>
<dbReference type="GO" id="GO:0045087">
    <property type="term" value="P:innate immune response"/>
    <property type="evidence" value="ECO:0007669"/>
    <property type="project" value="UniProtKB-KW"/>
</dbReference>
<dbReference type="GO" id="GO:0006886">
    <property type="term" value="P:intracellular protein transport"/>
    <property type="evidence" value="ECO:0000318"/>
    <property type="project" value="GO_Central"/>
</dbReference>
<dbReference type="GO" id="GO:0007165">
    <property type="term" value="P:signal transduction"/>
    <property type="evidence" value="ECO:0000304"/>
    <property type="project" value="ProtInc"/>
</dbReference>
<dbReference type="InterPro" id="IPR015720">
    <property type="entry name" value="Emp24-like"/>
</dbReference>
<dbReference type="InterPro" id="IPR009038">
    <property type="entry name" value="GOLD_dom"/>
</dbReference>
<dbReference type="InterPro" id="IPR036598">
    <property type="entry name" value="GOLD_dom_sf"/>
</dbReference>
<dbReference type="PANTHER" id="PTHR22811">
    <property type="entry name" value="TRANSMEMBRANE EMP24 DOMAIN-CONTAINING PROTEIN"/>
    <property type="match status" value="1"/>
</dbReference>
<dbReference type="Pfam" id="PF01105">
    <property type="entry name" value="EMP24_GP25L"/>
    <property type="match status" value="1"/>
</dbReference>
<dbReference type="SMART" id="SM01190">
    <property type="entry name" value="EMP24_GP25L"/>
    <property type="match status" value="1"/>
</dbReference>
<dbReference type="SUPFAM" id="SSF101576">
    <property type="entry name" value="Supernatant protein factor (SPF), C-terminal domain"/>
    <property type="match status" value="1"/>
</dbReference>
<dbReference type="PROSITE" id="PS50866">
    <property type="entry name" value="GOLD"/>
    <property type="match status" value="1"/>
</dbReference>
<name>TMED1_HUMAN</name>
<accession>Q13445</accession>
<reference key="1">
    <citation type="journal article" date="1996" name="J. Biol. Chem.">
        <title>Cloning of a putative ligand for the T1/ST2 receptor.</title>
        <authorList>
            <person name="Gayle M.A."/>
            <person name="Slack J.L."/>
            <person name="Bonnert T.P."/>
            <person name="Renshaw B.R."/>
            <person name="Sonoda G."/>
            <person name="Taguchi T."/>
            <person name="Testa J.R."/>
            <person name="Dower S.K."/>
            <person name="Sims J.E."/>
        </authorList>
    </citation>
    <scope>NUCLEOTIDE SEQUENCE [MRNA]</scope>
    <scope>TISSUE SPECIFICITY</scope>
    <scope>POSSIBLE INTERACTION WITH IL1RL1</scope>
    <source>
        <tissue>Glioblastoma</tissue>
    </source>
</reference>
<reference key="2">
    <citation type="journal article" date="2004" name="Nature">
        <title>The DNA sequence and biology of human chromosome 19.</title>
        <authorList>
            <person name="Grimwood J."/>
            <person name="Gordon L.A."/>
            <person name="Olsen A.S."/>
            <person name="Terry A."/>
            <person name="Schmutz J."/>
            <person name="Lamerdin J.E."/>
            <person name="Hellsten U."/>
            <person name="Goodstein D."/>
            <person name="Couronne O."/>
            <person name="Tran-Gyamfi M."/>
            <person name="Aerts A."/>
            <person name="Altherr M."/>
            <person name="Ashworth L."/>
            <person name="Bajorek E."/>
            <person name="Black S."/>
            <person name="Branscomb E."/>
            <person name="Caenepeel S."/>
            <person name="Carrano A.V."/>
            <person name="Caoile C."/>
            <person name="Chan Y.M."/>
            <person name="Christensen M."/>
            <person name="Cleland C.A."/>
            <person name="Copeland A."/>
            <person name="Dalin E."/>
            <person name="Dehal P."/>
            <person name="Denys M."/>
            <person name="Detter J.C."/>
            <person name="Escobar J."/>
            <person name="Flowers D."/>
            <person name="Fotopulos D."/>
            <person name="Garcia C."/>
            <person name="Georgescu A.M."/>
            <person name="Glavina T."/>
            <person name="Gomez M."/>
            <person name="Gonzales E."/>
            <person name="Groza M."/>
            <person name="Hammon N."/>
            <person name="Hawkins T."/>
            <person name="Haydu L."/>
            <person name="Ho I."/>
            <person name="Huang W."/>
            <person name="Israni S."/>
            <person name="Jett J."/>
            <person name="Kadner K."/>
            <person name="Kimball H."/>
            <person name="Kobayashi A."/>
            <person name="Larionov V."/>
            <person name="Leem S.-H."/>
            <person name="Lopez F."/>
            <person name="Lou Y."/>
            <person name="Lowry S."/>
            <person name="Malfatti S."/>
            <person name="Martinez D."/>
            <person name="McCready P.M."/>
            <person name="Medina C."/>
            <person name="Morgan J."/>
            <person name="Nelson K."/>
            <person name="Nolan M."/>
            <person name="Ovcharenko I."/>
            <person name="Pitluck S."/>
            <person name="Pollard M."/>
            <person name="Popkie A.P."/>
            <person name="Predki P."/>
            <person name="Quan G."/>
            <person name="Ramirez L."/>
            <person name="Rash S."/>
            <person name="Retterer J."/>
            <person name="Rodriguez A."/>
            <person name="Rogers S."/>
            <person name="Salamov A."/>
            <person name="Salazar A."/>
            <person name="She X."/>
            <person name="Smith D."/>
            <person name="Slezak T."/>
            <person name="Solovyev V."/>
            <person name="Thayer N."/>
            <person name="Tice H."/>
            <person name="Tsai M."/>
            <person name="Ustaszewska A."/>
            <person name="Vo N."/>
            <person name="Wagner M."/>
            <person name="Wheeler J."/>
            <person name="Wu K."/>
            <person name="Xie G."/>
            <person name="Yang J."/>
            <person name="Dubchak I."/>
            <person name="Furey T.S."/>
            <person name="DeJong P."/>
            <person name="Dickson M."/>
            <person name="Gordon D."/>
            <person name="Eichler E.E."/>
            <person name="Pennacchio L.A."/>
            <person name="Richardson P."/>
            <person name="Stubbs L."/>
            <person name="Rokhsar D.S."/>
            <person name="Myers R.M."/>
            <person name="Rubin E.M."/>
            <person name="Lucas S.M."/>
        </authorList>
    </citation>
    <scope>NUCLEOTIDE SEQUENCE [LARGE SCALE GENOMIC DNA]</scope>
</reference>
<reference key="3">
    <citation type="journal article" date="2004" name="Genome Res.">
        <title>The status, quality, and expansion of the NIH full-length cDNA project: the Mammalian Gene Collection (MGC).</title>
        <authorList>
            <consortium name="The MGC Project Team"/>
        </authorList>
    </citation>
    <scope>NUCLEOTIDE SEQUENCE [LARGE SCALE MRNA]</scope>
    <source>
        <tissue>Melanoma</tissue>
    </source>
</reference>
<reference key="4">
    <citation type="journal article" date="2009" name="Proc. Natl. Acad. Sci. U.S.A.">
        <title>Global profiling of protease cleavage sites by chemoselective labeling of protein N-termini.</title>
        <authorList>
            <person name="Xu G."/>
            <person name="Shin S.B."/>
            <person name="Jaffrey S.R."/>
        </authorList>
    </citation>
    <scope>PROTEIN SEQUENCE [LARGE SCALE ANALYSIS] OF 24-43</scope>
    <source>
        <tissue>Leukemic T-cell</tissue>
    </source>
</reference>
<reference key="5">
    <citation type="journal article" date="2000" name="J. Cell Sci.">
        <title>Coupled transport of p24 family members.</title>
        <authorList>
            <person name="Emery G."/>
            <person name="Rojo M."/>
            <person name="Gruenberg J."/>
        </authorList>
    </citation>
    <scope>SUBCELLULAR LOCATION</scope>
</reference>
<reference key="6">
    <citation type="journal article" date="2002" name="J. Biol. Chem.">
        <title>Oligomeric state and stoichiometry of p24 proteins in the early secretory pathway.</title>
        <authorList>
            <person name="Jenne N."/>
            <person name="Frey K."/>
            <person name="Brugger B."/>
            <person name="Wieland F.T."/>
        </authorList>
    </citation>
    <scope>SUBCELLULAR LOCATION</scope>
    <scope>SUBUNIT</scope>
</reference>
<reference key="7">
    <citation type="journal article" date="2011" name="BMC Syst. Biol.">
        <title>Initial characterization of the human central proteome.</title>
        <authorList>
            <person name="Burkard T.R."/>
            <person name="Planyavsky M."/>
            <person name="Kaupe I."/>
            <person name="Breitwieser F.P."/>
            <person name="Buerckstuemmer T."/>
            <person name="Bennett K.L."/>
            <person name="Superti-Furga G."/>
            <person name="Colinge J."/>
        </authorList>
    </citation>
    <scope>IDENTIFICATION BY MASS SPECTROMETRY [LARGE SCALE ANALYSIS]</scope>
</reference>
<reference key="8">
    <citation type="journal article" date="2013" name="J. Biol. Chem.">
        <title>The GOLD domain-containing protein TMED1 is involved in interleukin-33 signaling.</title>
        <authorList>
            <person name="Connolly D.J."/>
            <person name="O'Neill L.A."/>
            <person name="McGettrick A.F."/>
        </authorList>
    </citation>
    <scope>FUNCTION</scope>
    <scope>INTERACTION WITH IL1RL1</scope>
    <scope>SUBCELLULAR LOCATION</scope>
    <scope>MUTAGENESIS OF CYS-45 AND CYS-106</scope>
</reference>
<reference key="9">
    <citation type="journal article" date="2014" name="J. Proteomics">
        <title>An enzyme assisted RP-RPLC approach for in-depth analysis of human liver phosphoproteome.</title>
        <authorList>
            <person name="Bian Y."/>
            <person name="Song C."/>
            <person name="Cheng K."/>
            <person name="Dong M."/>
            <person name="Wang F."/>
            <person name="Huang J."/>
            <person name="Sun D."/>
            <person name="Wang L."/>
            <person name="Ye M."/>
            <person name="Zou H."/>
        </authorList>
    </citation>
    <scope>IDENTIFICATION BY MASS SPECTROMETRY [LARGE SCALE ANALYSIS]</scope>
    <source>
        <tissue>Liver</tissue>
    </source>
</reference>
<reference key="10">
    <citation type="journal article" date="2015" name="Proteomics">
        <title>N-terminome analysis of the human mitochondrial proteome.</title>
        <authorList>
            <person name="Vaca Jacome A.S."/>
            <person name="Rabilloud T."/>
            <person name="Schaeffer-Reiss C."/>
            <person name="Rompais M."/>
            <person name="Ayoub D."/>
            <person name="Lane L."/>
            <person name="Bairoch A."/>
            <person name="Van Dorsselaer A."/>
            <person name="Carapito C."/>
        </authorList>
    </citation>
    <scope>CLEAVAGE OF SIGNAL PEPTIDE [LARGE SCALE ANALYSIS] AFTER GLY-23</scope>
    <scope>IDENTIFICATION BY MASS SPECTROMETRY [LARGE SCALE ANALYSIS]</scope>
</reference>
<reference key="11">
    <citation type="journal article" date="2020" name="Elife">
        <title>Interaction mapping of endoplasmic reticulum ubiquitin ligases identifies modulators of innate immune signalling.</title>
        <authorList>
            <person name="Fenech E.J."/>
            <person name="Lari F."/>
            <person name="Charles P.D."/>
            <person name="Fischer R."/>
            <person name="Laetitia-Thezenas M."/>
            <person name="Bagola K."/>
            <person name="Paton A.W."/>
            <person name="Paton J.C."/>
            <person name="Gyrd-Hansen M."/>
            <person name="Kessler B.M."/>
            <person name="Christianson J.C."/>
        </authorList>
    </citation>
    <scope>FUNCTION</scope>
    <scope>INTERACTION WITH RNF26</scope>
</reference>
<reference key="12">
    <citation type="journal article" date="2006" name="Science">
        <title>The consensus coding sequences of human breast and colorectal cancers.</title>
        <authorList>
            <person name="Sjoeblom T."/>
            <person name="Jones S."/>
            <person name="Wood L.D."/>
            <person name="Parsons D.W."/>
            <person name="Lin J."/>
            <person name="Barber T.D."/>
            <person name="Mandelker D."/>
            <person name="Leary R.J."/>
            <person name="Ptak J."/>
            <person name="Silliman N."/>
            <person name="Szabo S."/>
            <person name="Buckhaults P."/>
            <person name="Farrell C."/>
            <person name="Meeh P."/>
            <person name="Markowitz S.D."/>
            <person name="Willis J."/>
            <person name="Dawson D."/>
            <person name="Willson J.K.V."/>
            <person name="Gazdar A.F."/>
            <person name="Hartigan J."/>
            <person name="Wu L."/>
            <person name="Liu C."/>
            <person name="Parmigiani G."/>
            <person name="Park B.H."/>
            <person name="Bachman K.E."/>
            <person name="Papadopoulos N."/>
            <person name="Vogelstein B."/>
            <person name="Kinzler K.W."/>
            <person name="Velculescu V.E."/>
        </authorList>
    </citation>
    <scope>VARIANT [LARGE SCALE ANALYSIS] ASN-102</scope>
</reference>
<comment type="function">
    <text evidence="7 8">Potential role in vesicular protein trafficking, mainly in the early secretory pathway. May act as a cargo receptor at the lumenal side for incorporation of secretory cargo molecules into transport vesicles and may be involved in vesicle coat formation at the cytoplasmic side. Plays a positive role in IL-33-mediated IL-8 and IL-6 production by interacting with interleukin-33 receptor IL1RL1 (PubMed:23319592). Also plays a role in the modulation of innate immune signaling through the cGAS-STING pathway by interacting with RNF26 (PubMed:32614325).</text>
</comment>
<comment type="subunit">
    <text evidence="4 7 8">Homodimer in endoplasmic reticulum, endoplasmic reticulum-Golgi intermediate compartment and cis-Golgi network. Interacts with IL1RL1 (PubMed:23319592). Interacts with RNF26; this interaction is important to modulate innate immune signaling through the cGAS-STING pathway (PubMed:32614325).</text>
</comment>
<comment type="subcellular location">
    <subcellularLocation>
        <location evidence="11">Cell membrane</location>
        <topology evidence="1">Single-pass type I membrane protein</topology>
    </subcellularLocation>
    <subcellularLocation>
        <location evidence="3 4 7">Endoplasmic reticulum membrane</location>
        <topology evidence="1">Single-pass type I membrane protein</topology>
    </subcellularLocation>
    <subcellularLocation>
        <location evidence="3 4">Golgi apparatus</location>
        <location evidence="3 4">cis-Golgi network membrane</location>
        <topology evidence="1">Single-pass type I membrane protein</topology>
    </subcellularLocation>
    <subcellularLocation>
        <location evidence="4">Endoplasmic reticulum-Golgi intermediate compartment membrane</location>
        <topology evidence="1">Single-pass type I membrane protein</topology>
    </subcellularLocation>
</comment>
<comment type="tissue specificity">
    <text evidence="9">Widely expressed.</text>
</comment>
<comment type="miscellaneous">
    <text>Found only in very low concentrations in the endoplasmic reticulum, Golgi apparatus and endoplasmic reticulum-Golgi intermediate compartment compared to other members of the EMP24/GP25L family.</text>
</comment>
<comment type="similarity">
    <text evidence="10">Belongs to the EMP24/GP25L family.</text>
</comment>
<gene>
    <name type="primary">TMED1</name>
    <name type="synonym">IL1RL1L</name>
    <name type="synonym">IL1RL1LG</name>
</gene>